<sequence>MKEKIVLAYSGGLDTSVAVKWLIDKGYDVVAVCLDVGEGKDLDVVYSKALDMGAVECHIIDATKEFSDDFVSYAIKGNLMYENSYPLVSALSRPLIAKKLVEIAEQTNSVGIAHGCTGKGNDQVRFEVAIKALNPNLKAFAPVREWGWSREEEIDYAIKHNIPVGINHDSPYSIDQNLWGRANECGILEDPYAAPPKDAYDLTAELEDTPDTPDEIILSFKNGVPVQLNHQDYDLDQLILTLNELAGKHGIGRIDHVENRLAGIKSREIYETPGAEVILKAHKALETLTLTKDVAHFKPVIEKQFAEQTYNGLWFSPLTDSLKLFIDSTQQYVEGDVRIKLFKGNAIVNGRKSLYTLYDEKLATYTKEDAFNQSAAVGFIDIYGLPTQVNAYLHGGYSNE</sequence>
<accession>Q4L4X7</accession>
<comment type="catalytic activity">
    <reaction evidence="1">
        <text>L-citrulline + L-aspartate + ATP = 2-(N(omega)-L-arginino)succinate + AMP + diphosphate + H(+)</text>
        <dbReference type="Rhea" id="RHEA:10932"/>
        <dbReference type="ChEBI" id="CHEBI:15378"/>
        <dbReference type="ChEBI" id="CHEBI:29991"/>
        <dbReference type="ChEBI" id="CHEBI:30616"/>
        <dbReference type="ChEBI" id="CHEBI:33019"/>
        <dbReference type="ChEBI" id="CHEBI:57472"/>
        <dbReference type="ChEBI" id="CHEBI:57743"/>
        <dbReference type="ChEBI" id="CHEBI:456215"/>
        <dbReference type="EC" id="6.3.4.5"/>
    </reaction>
</comment>
<comment type="pathway">
    <text evidence="1">Amino-acid biosynthesis; L-arginine biosynthesis; L-arginine from L-ornithine and carbamoyl phosphate: step 2/3.</text>
</comment>
<comment type="subunit">
    <text evidence="1">Homotetramer.</text>
</comment>
<comment type="subcellular location">
    <subcellularLocation>
        <location evidence="1">Cytoplasm</location>
    </subcellularLocation>
</comment>
<comment type="similarity">
    <text evidence="1">Belongs to the argininosuccinate synthase family. Type 1 subfamily.</text>
</comment>
<organism>
    <name type="scientific">Staphylococcus haemolyticus (strain JCSC1435)</name>
    <dbReference type="NCBI Taxonomy" id="279808"/>
    <lineage>
        <taxon>Bacteria</taxon>
        <taxon>Bacillati</taxon>
        <taxon>Bacillota</taxon>
        <taxon>Bacilli</taxon>
        <taxon>Bacillales</taxon>
        <taxon>Staphylococcaceae</taxon>
        <taxon>Staphylococcus</taxon>
    </lineage>
</organism>
<reference key="1">
    <citation type="journal article" date="2005" name="J. Bacteriol.">
        <title>Whole-genome sequencing of Staphylococcus haemolyticus uncovers the extreme plasticity of its genome and the evolution of human-colonizing staphylococcal species.</title>
        <authorList>
            <person name="Takeuchi F."/>
            <person name="Watanabe S."/>
            <person name="Baba T."/>
            <person name="Yuzawa H."/>
            <person name="Ito T."/>
            <person name="Morimoto Y."/>
            <person name="Kuroda M."/>
            <person name="Cui L."/>
            <person name="Takahashi M."/>
            <person name="Ankai A."/>
            <person name="Baba S."/>
            <person name="Fukui S."/>
            <person name="Lee J.C."/>
            <person name="Hiramatsu K."/>
        </authorList>
    </citation>
    <scope>NUCLEOTIDE SEQUENCE [LARGE SCALE GENOMIC DNA]</scope>
    <source>
        <strain>JCSC1435</strain>
    </source>
</reference>
<name>ASSY_STAHJ</name>
<dbReference type="EC" id="6.3.4.5" evidence="1"/>
<dbReference type="EMBL" id="AP006716">
    <property type="protein sequence ID" value="BAE05298.1"/>
    <property type="molecule type" value="Genomic_DNA"/>
</dbReference>
<dbReference type="RefSeq" id="WP_011276256.1">
    <property type="nucleotide sequence ID" value="NC_007168.1"/>
</dbReference>
<dbReference type="SMR" id="Q4L4X7"/>
<dbReference type="KEGG" id="sha:SH1989"/>
<dbReference type="eggNOG" id="COG0137">
    <property type="taxonomic scope" value="Bacteria"/>
</dbReference>
<dbReference type="HOGENOM" id="CLU_032784_4_2_9"/>
<dbReference type="OrthoDB" id="9801641at2"/>
<dbReference type="UniPathway" id="UPA00068">
    <property type="reaction ID" value="UER00113"/>
</dbReference>
<dbReference type="Proteomes" id="UP000000543">
    <property type="component" value="Chromosome"/>
</dbReference>
<dbReference type="GO" id="GO:0005737">
    <property type="term" value="C:cytoplasm"/>
    <property type="evidence" value="ECO:0007669"/>
    <property type="project" value="UniProtKB-SubCell"/>
</dbReference>
<dbReference type="GO" id="GO:0004055">
    <property type="term" value="F:argininosuccinate synthase activity"/>
    <property type="evidence" value="ECO:0007669"/>
    <property type="project" value="UniProtKB-UniRule"/>
</dbReference>
<dbReference type="GO" id="GO:0005524">
    <property type="term" value="F:ATP binding"/>
    <property type="evidence" value="ECO:0007669"/>
    <property type="project" value="UniProtKB-UniRule"/>
</dbReference>
<dbReference type="GO" id="GO:0000053">
    <property type="term" value="P:argininosuccinate metabolic process"/>
    <property type="evidence" value="ECO:0007669"/>
    <property type="project" value="TreeGrafter"/>
</dbReference>
<dbReference type="GO" id="GO:0006526">
    <property type="term" value="P:L-arginine biosynthetic process"/>
    <property type="evidence" value="ECO:0007669"/>
    <property type="project" value="UniProtKB-UniRule"/>
</dbReference>
<dbReference type="GO" id="GO:0000050">
    <property type="term" value="P:urea cycle"/>
    <property type="evidence" value="ECO:0007669"/>
    <property type="project" value="TreeGrafter"/>
</dbReference>
<dbReference type="CDD" id="cd01999">
    <property type="entry name" value="ASS"/>
    <property type="match status" value="1"/>
</dbReference>
<dbReference type="FunFam" id="1.20.5.470:FF:000002">
    <property type="entry name" value="Argininosuccinate synthase"/>
    <property type="match status" value="1"/>
</dbReference>
<dbReference type="FunFam" id="3.40.50.620:FF:000038">
    <property type="entry name" value="Argininosuccinate synthase"/>
    <property type="match status" value="1"/>
</dbReference>
<dbReference type="FunFam" id="3.90.1260.10:FF:000007">
    <property type="entry name" value="Argininosuccinate synthase"/>
    <property type="match status" value="1"/>
</dbReference>
<dbReference type="Gene3D" id="3.90.1260.10">
    <property type="entry name" value="Argininosuccinate synthetase, chain A, domain 2"/>
    <property type="match status" value="1"/>
</dbReference>
<dbReference type="Gene3D" id="3.40.50.620">
    <property type="entry name" value="HUPs"/>
    <property type="match status" value="1"/>
</dbReference>
<dbReference type="Gene3D" id="1.20.5.470">
    <property type="entry name" value="Single helix bin"/>
    <property type="match status" value="1"/>
</dbReference>
<dbReference type="HAMAP" id="MF_00005">
    <property type="entry name" value="Arg_succ_synth_type1"/>
    <property type="match status" value="1"/>
</dbReference>
<dbReference type="InterPro" id="IPR048268">
    <property type="entry name" value="Arginosuc_syn_C"/>
</dbReference>
<dbReference type="InterPro" id="IPR048267">
    <property type="entry name" value="Arginosuc_syn_N"/>
</dbReference>
<dbReference type="InterPro" id="IPR001518">
    <property type="entry name" value="Arginosuc_synth"/>
</dbReference>
<dbReference type="InterPro" id="IPR018223">
    <property type="entry name" value="Arginosuc_synth_CS"/>
</dbReference>
<dbReference type="InterPro" id="IPR023434">
    <property type="entry name" value="Arginosuc_synth_type_1_subfam"/>
</dbReference>
<dbReference type="InterPro" id="IPR024074">
    <property type="entry name" value="AS_cat/multimer_dom_body"/>
</dbReference>
<dbReference type="InterPro" id="IPR014729">
    <property type="entry name" value="Rossmann-like_a/b/a_fold"/>
</dbReference>
<dbReference type="NCBIfam" id="TIGR00032">
    <property type="entry name" value="argG"/>
    <property type="match status" value="1"/>
</dbReference>
<dbReference type="NCBIfam" id="NF001770">
    <property type="entry name" value="PRK00509.1"/>
    <property type="match status" value="1"/>
</dbReference>
<dbReference type="PANTHER" id="PTHR11587">
    <property type="entry name" value="ARGININOSUCCINATE SYNTHASE"/>
    <property type="match status" value="1"/>
</dbReference>
<dbReference type="PANTHER" id="PTHR11587:SF2">
    <property type="entry name" value="ARGININOSUCCINATE SYNTHASE"/>
    <property type="match status" value="1"/>
</dbReference>
<dbReference type="Pfam" id="PF20979">
    <property type="entry name" value="Arginosuc_syn_C"/>
    <property type="match status" value="1"/>
</dbReference>
<dbReference type="Pfam" id="PF00764">
    <property type="entry name" value="Arginosuc_synth"/>
    <property type="match status" value="1"/>
</dbReference>
<dbReference type="SUPFAM" id="SSF52402">
    <property type="entry name" value="Adenine nucleotide alpha hydrolases-like"/>
    <property type="match status" value="1"/>
</dbReference>
<dbReference type="SUPFAM" id="SSF69864">
    <property type="entry name" value="Argininosuccinate synthetase, C-terminal domain"/>
    <property type="match status" value="1"/>
</dbReference>
<dbReference type="PROSITE" id="PS00564">
    <property type="entry name" value="ARGININOSUCCIN_SYN_1"/>
    <property type="match status" value="1"/>
</dbReference>
<dbReference type="PROSITE" id="PS00565">
    <property type="entry name" value="ARGININOSUCCIN_SYN_2"/>
    <property type="match status" value="1"/>
</dbReference>
<evidence type="ECO:0000255" key="1">
    <source>
        <dbReference type="HAMAP-Rule" id="MF_00005"/>
    </source>
</evidence>
<proteinExistence type="inferred from homology"/>
<protein>
    <recommendedName>
        <fullName evidence="1">Argininosuccinate synthase</fullName>
        <ecNumber evidence="1">6.3.4.5</ecNumber>
    </recommendedName>
    <alternativeName>
        <fullName evidence="1">Citrulline--aspartate ligase</fullName>
    </alternativeName>
</protein>
<keyword id="KW-0028">Amino-acid biosynthesis</keyword>
<keyword id="KW-0055">Arginine biosynthesis</keyword>
<keyword id="KW-0067">ATP-binding</keyword>
<keyword id="KW-0963">Cytoplasm</keyword>
<keyword id="KW-0436">Ligase</keyword>
<keyword id="KW-0547">Nucleotide-binding</keyword>
<gene>
    <name evidence="1" type="primary">argG</name>
    <name type="ordered locus">SH1989</name>
</gene>
<feature type="chain" id="PRO_0000263978" description="Argininosuccinate synthase">
    <location>
        <begin position="1"/>
        <end position="400"/>
    </location>
</feature>
<feature type="binding site" evidence="1">
    <location>
        <begin position="8"/>
        <end position="16"/>
    </location>
    <ligand>
        <name>ATP</name>
        <dbReference type="ChEBI" id="CHEBI:30616"/>
    </ligand>
</feature>
<feature type="binding site" evidence="1">
    <location>
        <position position="85"/>
    </location>
    <ligand>
        <name>L-citrulline</name>
        <dbReference type="ChEBI" id="CHEBI:57743"/>
    </ligand>
</feature>
<feature type="binding site" evidence="1">
    <location>
        <position position="115"/>
    </location>
    <ligand>
        <name>ATP</name>
        <dbReference type="ChEBI" id="CHEBI:30616"/>
    </ligand>
</feature>
<feature type="binding site" evidence="1">
    <location>
        <position position="117"/>
    </location>
    <ligand>
        <name>L-aspartate</name>
        <dbReference type="ChEBI" id="CHEBI:29991"/>
    </ligand>
</feature>
<feature type="binding site" evidence="1">
    <location>
        <position position="121"/>
    </location>
    <ligand>
        <name>L-aspartate</name>
        <dbReference type="ChEBI" id="CHEBI:29991"/>
    </ligand>
</feature>
<feature type="binding site" evidence="1">
    <location>
        <position position="121"/>
    </location>
    <ligand>
        <name>L-citrulline</name>
        <dbReference type="ChEBI" id="CHEBI:57743"/>
    </ligand>
</feature>
<feature type="binding site" evidence="1">
    <location>
        <position position="122"/>
    </location>
    <ligand>
        <name>L-aspartate</name>
        <dbReference type="ChEBI" id="CHEBI:29991"/>
    </ligand>
</feature>
<feature type="binding site" evidence="1">
    <location>
        <position position="125"/>
    </location>
    <ligand>
        <name>L-citrulline</name>
        <dbReference type="ChEBI" id="CHEBI:57743"/>
    </ligand>
</feature>
<feature type="binding site" evidence="1">
    <location>
        <position position="173"/>
    </location>
    <ligand>
        <name>L-citrulline</name>
        <dbReference type="ChEBI" id="CHEBI:57743"/>
    </ligand>
</feature>
<feature type="binding site" evidence="1">
    <location>
        <position position="258"/>
    </location>
    <ligand>
        <name>L-citrulline</name>
        <dbReference type="ChEBI" id="CHEBI:57743"/>
    </ligand>
</feature>
<feature type="binding site" evidence="1">
    <location>
        <position position="270"/>
    </location>
    <ligand>
        <name>L-citrulline</name>
        <dbReference type="ChEBI" id="CHEBI:57743"/>
    </ligand>
</feature>